<evidence type="ECO:0000250" key="1"/>
<evidence type="ECO:0000255" key="2"/>
<evidence type="ECO:0000305" key="3"/>
<dbReference type="EMBL" id="EU926079">
    <property type="protein sequence ID" value="ACI41411.1"/>
    <property type="molecule type" value="mRNA"/>
</dbReference>
<dbReference type="EMBL" id="FM864083">
    <property type="protein sequence ID" value="CAS03680.1"/>
    <property type="molecule type" value="mRNA"/>
</dbReference>
<dbReference type="SMR" id="B6DCZ5"/>
<dbReference type="ArachnoServer" id="AS001018">
    <property type="toxin name" value="U8-lycotoxin-Ls1n"/>
</dbReference>
<dbReference type="GO" id="GO:0005576">
    <property type="term" value="C:extracellular region"/>
    <property type="evidence" value="ECO:0007669"/>
    <property type="project" value="UniProtKB-SubCell"/>
</dbReference>
<dbReference type="GO" id="GO:0090729">
    <property type="term" value="F:toxin activity"/>
    <property type="evidence" value="ECO:0007669"/>
    <property type="project" value="UniProtKB-KW"/>
</dbReference>
<dbReference type="InterPro" id="IPR019553">
    <property type="entry name" value="Spider_toxin_CSTX_knottin"/>
</dbReference>
<dbReference type="Pfam" id="PF10530">
    <property type="entry name" value="Toxin_35"/>
    <property type="match status" value="1"/>
</dbReference>
<feature type="signal peptide" evidence="2">
    <location>
        <begin position="1"/>
        <end position="20"/>
    </location>
</feature>
<feature type="propeptide" id="PRO_0000401809" evidence="1">
    <location>
        <begin position="21"/>
        <end position="26"/>
    </location>
</feature>
<feature type="chain" id="PRO_0000401810" description="U8-lycotoxin-Ls1n">
    <location>
        <begin position="27"/>
        <end position="77"/>
    </location>
</feature>
<protein>
    <recommendedName>
        <fullName>U8-lycotoxin-Ls1n</fullName>
    </recommendedName>
    <alternativeName>
        <fullName>Toxin-like structure LSTX-H24</fullName>
    </alternativeName>
</protein>
<organism>
    <name type="scientific">Lycosa singoriensis</name>
    <name type="common">Wolf spider</name>
    <name type="synonym">Aranea singoriensis</name>
    <dbReference type="NCBI Taxonomy" id="434756"/>
    <lineage>
        <taxon>Eukaryota</taxon>
        <taxon>Metazoa</taxon>
        <taxon>Ecdysozoa</taxon>
        <taxon>Arthropoda</taxon>
        <taxon>Chelicerata</taxon>
        <taxon>Arachnida</taxon>
        <taxon>Araneae</taxon>
        <taxon>Araneomorphae</taxon>
        <taxon>Entelegynae</taxon>
        <taxon>Lycosoidea</taxon>
        <taxon>Lycosidae</taxon>
        <taxon>Lycosa</taxon>
    </lineage>
</organism>
<reference key="1">
    <citation type="journal article" date="2010" name="Zoology">
        <title>Transcriptome analysis of the venom glands of the Chinese wolf spider Lycosa singoriensis.</title>
        <authorList>
            <person name="Zhang Y."/>
            <person name="Chen J."/>
            <person name="Tang X."/>
            <person name="Wang F."/>
            <person name="Jiang L."/>
            <person name="Xiong X."/>
            <person name="Wang M."/>
            <person name="Rong M."/>
            <person name="Liu Z."/>
            <person name="Liang S."/>
        </authorList>
    </citation>
    <scope>NUCLEOTIDE SEQUENCE [LARGE SCALE MRNA]</scope>
    <source>
        <tissue>Venom gland</tissue>
    </source>
</reference>
<name>TX824_LYCSI</name>
<sequence>MKLMIFTGLVLFAIVSLIEAQAENEKPCLPEYKVCTHAPGNCCSDLVCDRYGRYKSGAQIGRNCFCLQKGVIYKREN</sequence>
<proteinExistence type="evidence at transcript level"/>
<keyword id="KW-1015">Disulfide bond</keyword>
<keyword id="KW-0964">Secreted</keyword>
<keyword id="KW-0732">Signal</keyword>
<keyword id="KW-0800">Toxin</keyword>
<comment type="subcellular location">
    <subcellularLocation>
        <location evidence="1">Secreted</location>
    </subcellularLocation>
</comment>
<comment type="tissue specificity">
    <text>Expressed by the venom gland.</text>
</comment>
<comment type="PTM">
    <text evidence="1">Contains 4 disulfide bonds.</text>
</comment>
<comment type="similarity">
    <text evidence="3">Belongs to the neurotoxin 19 (CSTX) family. 08 (U8-Lctx) subfamily.</text>
</comment>
<accession>B6DCZ5</accession>